<evidence type="ECO:0000250" key="1"/>
<evidence type="ECO:0000255" key="2"/>
<evidence type="ECO:0000256" key="3">
    <source>
        <dbReference type="SAM" id="MobiDB-lite"/>
    </source>
</evidence>
<evidence type="ECO:0000269" key="4">
    <source>
    </source>
</evidence>
<evidence type="ECO:0000269" key="5">
    <source>
    </source>
</evidence>
<evidence type="ECO:0000305" key="6"/>
<evidence type="ECO:0007744" key="7">
    <source>
    </source>
</evidence>
<evidence type="ECO:0007744" key="8">
    <source>
    </source>
</evidence>
<evidence type="ECO:0007744" key="9">
    <source>
    </source>
</evidence>
<evidence type="ECO:0007744" key="10">
    <source>
    </source>
</evidence>
<evidence type="ECO:0007744" key="11">
    <source>
    </source>
</evidence>
<name>NOC3L_HUMAN</name>
<comment type="function">
    <text evidence="1">May be required for adipogenesis.</text>
</comment>
<comment type="subcellular location">
    <subcellularLocation>
        <location>Nucleus</location>
        <location>Nucleolus</location>
    </subcellularLocation>
    <subcellularLocation>
        <location>Nucleus speckle</location>
    </subcellularLocation>
</comment>
<comment type="tissue specificity">
    <text evidence="5">Expressed in colon, heart, kidney, liver, lung, placenta, skeletal muscle, small intestine, spleen and thymus.</text>
</comment>
<comment type="similarity">
    <text evidence="6">Belongs to the CBF/MAK21 family.</text>
</comment>
<comment type="sequence caution" evidence="6">
    <conflict type="erroneous initiation">
        <sequence resource="EMBL-CDS" id="BAB14291"/>
    </conflict>
</comment>
<comment type="sequence caution" evidence="6">
    <conflict type="erroneous initiation">
        <sequence resource="EMBL-CDS" id="BAB15599"/>
    </conflict>
</comment>
<sequence>MKARRNKKQIPSFRKLIKTSKVKLENKLKNKQFKQQSTLKKYRKEQRKLRQAVKDAVSKKPIPLENPKEKRPGKRIEREEEEEEEALPLDMMDEDDLQLMKDLGQRVSFLTRDLSSSEPVHAKKRKHERIIDKYEKIPRTLQTAPEKELIHLLPIKDKSGIIPQTREKPVTDSNKDEEDQEEERELEEEIIEDPIQELTIEEHLIERKKKLQEKKMHIAALASAILSDPENNIKKLKELRSMLMEQDPDVAVTVRKLVIVSLMELFKDITPSYKIRPLTEAEKSTKTRKETQKLREFEEGLVSQYKFYLENLEQMVKDWKQRKLKKSNVVSLKAYKGLAEVAVKSLCELLVALPHFNFHNNIIVLIVPLMNDMSKLISEMCCEAVKKLFKQDKLGQASLGVIKVISGFVKGRNYEVRPEMLKTFLCLRIKEVEVKKDTEDINKPKKFMTFKEKRKSLSRMQRKWKKAEEKLERELREAEASESTEKKLKLHTETLNIVFVTYFRILKKAQRSPLLPAVLEGLAKFAHLINVEFFDDLLVVLHTLIESGDLSYQESLHCVQTAFHILSGQGDVLNIDPLKFYTHLYKTLFKLHAGATNEGVEIVLQCLDVMLTKRRKQVSQQRALAFIKRLCTLALHVLPNSSIGILATTRILMHTFPKTDLLLDSESQGSGVFLPELDEPEYCNAQNTALWELHALRRHYHPIVQRFAAHLIAGAPSEGSGALKPELSRRSATELFEAYSMAEMTFNPPVESSNPKIKGKFLQGDSFLNEDLNQLIKRYSSEVATESPLDFTKYLKTSLH</sequence>
<accession>Q8WTT2</accession>
<accession>Q9H5M6</accession>
<accession>Q9H9D8</accession>
<keyword id="KW-0002">3D-structure</keyword>
<keyword id="KW-0175">Coiled coil</keyword>
<keyword id="KW-1017">Isopeptide bond</keyword>
<keyword id="KW-0539">Nucleus</keyword>
<keyword id="KW-0597">Phosphoprotein</keyword>
<keyword id="KW-1267">Proteomics identification</keyword>
<keyword id="KW-1185">Reference proteome</keyword>
<keyword id="KW-0832">Ubl conjugation</keyword>
<reference key="1">
    <citation type="journal article" date="2004" name="J. Cell Sci.">
        <title>Fad24, a mammalian homolog of Noc3p, is a positive regulator in adipocyte differentiation.</title>
        <authorList>
            <person name="Tominaga K."/>
            <person name="Johmura Y."/>
            <person name="Nishizuka M."/>
            <person name="Imagawa M."/>
        </authorList>
    </citation>
    <scope>NUCLEOTIDE SEQUENCE [MRNA]</scope>
    <scope>SUBCELLULAR LOCATION</scope>
    <scope>TISSUE SPECIFICITY</scope>
</reference>
<reference key="2">
    <citation type="journal article" date="2004" name="Nature">
        <title>The DNA sequence and comparative analysis of human chromosome 10.</title>
        <authorList>
            <person name="Deloukas P."/>
            <person name="Earthrowl M.E."/>
            <person name="Grafham D.V."/>
            <person name="Rubenfield M."/>
            <person name="French L."/>
            <person name="Steward C.A."/>
            <person name="Sims S.K."/>
            <person name="Jones M.C."/>
            <person name="Searle S."/>
            <person name="Scott C."/>
            <person name="Howe K."/>
            <person name="Hunt S.E."/>
            <person name="Andrews T.D."/>
            <person name="Gilbert J.G.R."/>
            <person name="Swarbreck D."/>
            <person name="Ashurst J.L."/>
            <person name="Taylor A."/>
            <person name="Battles J."/>
            <person name="Bird C.P."/>
            <person name="Ainscough R."/>
            <person name="Almeida J.P."/>
            <person name="Ashwell R.I.S."/>
            <person name="Ambrose K.D."/>
            <person name="Babbage A.K."/>
            <person name="Bagguley C.L."/>
            <person name="Bailey J."/>
            <person name="Banerjee R."/>
            <person name="Bates K."/>
            <person name="Beasley H."/>
            <person name="Bray-Allen S."/>
            <person name="Brown A.J."/>
            <person name="Brown J.Y."/>
            <person name="Burford D.C."/>
            <person name="Burrill W."/>
            <person name="Burton J."/>
            <person name="Cahill P."/>
            <person name="Camire D."/>
            <person name="Carter N.P."/>
            <person name="Chapman J.C."/>
            <person name="Clark S.Y."/>
            <person name="Clarke G."/>
            <person name="Clee C.M."/>
            <person name="Clegg S."/>
            <person name="Corby N."/>
            <person name="Coulson A."/>
            <person name="Dhami P."/>
            <person name="Dutta I."/>
            <person name="Dunn M."/>
            <person name="Faulkner L."/>
            <person name="Frankish A."/>
            <person name="Frankland J.A."/>
            <person name="Garner P."/>
            <person name="Garnett J."/>
            <person name="Gribble S."/>
            <person name="Griffiths C."/>
            <person name="Grocock R."/>
            <person name="Gustafson E."/>
            <person name="Hammond S."/>
            <person name="Harley J.L."/>
            <person name="Hart E."/>
            <person name="Heath P.D."/>
            <person name="Ho T.P."/>
            <person name="Hopkins B."/>
            <person name="Horne J."/>
            <person name="Howden P.J."/>
            <person name="Huckle E."/>
            <person name="Hynds C."/>
            <person name="Johnson C."/>
            <person name="Johnson D."/>
            <person name="Kana A."/>
            <person name="Kay M."/>
            <person name="Kimberley A.M."/>
            <person name="Kershaw J.K."/>
            <person name="Kokkinaki M."/>
            <person name="Laird G.K."/>
            <person name="Lawlor S."/>
            <person name="Lee H.M."/>
            <person name="Leongamornlert D.A."/>
            <person name="Laird G."/>
            <person name="Lloyd C."/>
            <person name="Lloyd D.M."/>
            <person name="Loveland J."/>
            <person name="Lovell J."/>
            <person name="McLaren S."/>
            <person name="McLay K.E."/>
            <person name="McMurray A."/>
            <person name="Mashreghi-Mohammadi M."/>
            <person name="Matthews L."/>
            <person name="Milne S."/>
            <person name="Nickerson T."/>
            <person name="Nguyen M."/>
            <person name="Overton-Larty E."/>
            <person name="Palmer S.A."/>
            <person name="Pearce A.V."/>
            <person name="Peck A.I."/>
            <person name="Pelan S."/>
            <person name="Phillimore B."/>
            <person name="Porter K."/>
            <person name="Rice C.M."/>
            <person name="Rogosin A."/>
            <person name="Ross M.T."/>
            <person name="Sarafidou T."/>
            <person name="Sehra H.K."/>
            <person name="Shownkeen R."/>
            <person name="Skuce C.D."/>
            <person name="Smith M."/>
            <person name="Standring L."/>
            <person name="Sycamore N."/>
            <person name="Tester J."/>
            <person name="Thorpe A."/>
            <person name="Torcasso W."/>
            <person name="Tracey A."/>
            <person name="Tromans A."/>
            <person name="Tsolas J."/>
            <person name="Wall M."/>
            <person name="Walsh J."/>
            <person name="Wang H."/>
            <person name="Weinstock K."/>
            <person name="West A.P."/>
            <person name="Willey D.L."/>
            <person name="Whitehead S.L."/>
            <person name="Wilming L."/>
            <person name="Wray P.W."/>
            <person name="Young L."/>
            <person name="Chen Y."/>
            <person name="Lovering R.C."/>
            <person name="Moschonas N.K."/>
            <person name="Siebert R."/>
            <person name="Fechtel K."/>
            <person name="Bentley D."/>
            <person name="Durbin R.M."/>
            <person name="Hubbard T."/>
            <person name="Doucette-Stamm L."/>
            <person name="Beck S."/>
            <person name="Smith D.R."/>
            <person name="Rogers J."/>
        </authorList>
    </citation>
    <scope>NUCLEOTIDE SEQUENCE [LARGE SCALE GENOMIC DNA]</scope>
</reference>
<reference key="3">
    <citation type="journal article" date="2004" name="Genome Res.">
        <title>The status, quality, and expansion of the NIH full-length cDNA project: the Mammalian Gene Collection (MGC).</title>
        <authorList>
            <consortium name="The MGC Project Team"/>
        </authorList>
    </citation>
    <scope>NUCLEOTIDE SEQUENCE [LARGE SCALE MRNA]</scope>
    <source>
        <tissue>Uterus</tissue>
    </source>
</reference>
<reference key="4">
    <citation type="journal article" date="2004" name="Nat. Genet.">
        <title>Complete sequencing and characterization of 21,243 full-length human cDNAs.</title>
        <authorList>
            <person name="Ota T."/>
            <person name="Suzuki Y."/>
            <person name="Nishikawa T."/>
            <person name="Otsuki T."/>
            <person name="Sugiyama T."/>
            <person name="Irie R."/>
            <person name="Wakamatsu A."/>
            <person name="Hayashi K."/>
            <person name="Sato H."/>
            <person name="Nagai K."/>
            <person name="Kimura K."/>
            <person name="Makita H."/>
            <person name="Sekine M."/>
            <person name="Obayashi M."/>
            <person name="Nishi T."/>
            <person name="Shibahara T."/>
            <person name="Tanaka T."/>
            <person name="Ishii S."/>
            <person name="Yamamoto J."/>
            <person name="Saito K."/>
            <person name="Kawai Y."/>
            <person name="Isono Y."/>
            <person name="Nakamura Y."/>
            <person name="Nagahari K."/>
            <person name="Murakami K."/>
            <person name="Yasuda T."/>
            <person name="Iwayanagi T."/>
            <person name="Wagatsuma M."/>
            <person name="Shiratori A."/>
            <person name="Sudo H."/>
            <person name="Hosoiri T."/>
            <person name="Kaku Y."/>
            <person name="Kodaira H."/>
            <person name="Kondo H."/>
            <person name="Sugawara M."/>
            <person name="Takahashi M."/>
            <person name="Kanda K."/>
            <person name="Yokoi T."/>
            <person name="Furuya T."/>
            <person name="Kikkawa E."/>
            <person name="Omura Y."/>
            <person name="Abe K."/>
            <person name="Kamihara K."/>
            <person name="Katsuta N."/>
            <person name="Sato K."/>
            <person name="Tanikawa M."/>
            <person name="Yamazaki M."/>
            <person name="Ninomiya K."/>
            <person name="Ishibashi T."/>
            <person name="Yamashita H."/>
            <person name="Murakawa K."/>
            <person name="Fujimori K."/>
            <person name="Tanai H."/>
            <person name="Kimata M."/>
            <person name="Watanabe M."/>
            <person name="Hiraoka S."/>
            <person name="Chiba Y."/>
            <person name="Ishida S."/>
            <person name="Ono Y."/>
            <person name="Takiguchi S."/>
            <person name="Watanabe S."/>
            <person name="Yosida M."/>
            <person name="Hotuta T."/>
            <person name="Kusano J."/>
            <person name="Kanehori K."/>
            <person name="Takahashi-Fujii A."/>
            <person name="Hara H."/>
            <person name="Tanase T.-O."/>
            <person name="Nomura Y."/>
            <person name="Togiya S."/>
            <person name="Komai F."/>
            <person name="Hara R."/>
            <person name="Takeuchi K."/>
            <person name="Arita M."/>
            <person name="Imose N."/>
            <person name="Musashino K."/>
            <person name="Yuuki H."/>
            <person name="Oshima A."/>
            <person name="Sasaki N."/>
            <person name="Aotsuka S."/>
            <person name="Yoshikawa Y."/>
            <person name="Matsunawa H."/>
            <person name="Ichihara T."/>
            <person name="Shiohata N."/>
            <person name="Sano S."/>
            <person name="Moriya S."/>
            <person name="Momiyama H."/>
            <person name="Satoh N."/>
            <person name="Takami S."/>
            <person name="Terashima Y."/>
            <person name="Suzuki O."/>
            <person name="Nakagawa S."/>
            <person name="Senoh A."/>
            <person name="Mizoguchi H."/>
            <person name="Goto Y."/>
            <person name="Shimizu F."/>
            <person name="Wakebe H."/>
            <person name="Hishigaki H."/>
            <person name="Watanabe T."/>
            <person name="Sugiyama A."/>
            <person name="Takemoto M."/>
            <person name="Kawakami B."/>
            <person name="Yamazaki M."/>
            <person name="Watanabe K."/>
            <person name="Kumagai A."/>
            <person name="Itakura S."/>
            <person name="Fukuzumi Y."/>
            <person name="Fujimori Y."/>
            <person name="Komiyama M."/>
            <person name="Tashiro H."/>
            <person name="Tanigami A."/>
            <person name="Fujiwara T."/>
            <person name="Ono T."/>
            <person name="Yamada K."/>
            <person name="Fujii Y."/>
            <person name="Ozaki K."/>
            <person name="Hirao M."/>
            <person name="Ohmori Y."/>
            <person name="Kawabata A."/>
            <person name="Hikiji T."/>
            <person name="Kobatake N."/>
            <person name="Inagaki H."/>
            <person name="Ikema Y."/>
            <person name="Okamoto S."/>
            <person name="Okitani R."/>
            <person name="Kawakami T."/>
            <person name="Noguchi S."/>
            <person name="Itoh T."/>
            <person name="Shigeta K."/>
            <person name="Senba T."/>
            <person name="Matsumura K."/>
            <person name="Nakajima Y."/>
            <person name="Mizuno T."/>
            <person name="Morinaga M."/>
            <person name="Sasaki M."/>
            <person name="Togashi T."/>
            <person name="Oyama M."/>
            <person name="Hata H."/>
            <person name="Watanabe M."/>
            <person name="Komatsu T."/>
            <person name="Mizushima-Sugano J."/>
            <person name="Satoh T."/>
            <person name="Shirai Y."/>
            <person name="Takahashi Y."/>
            <person name="Nakagawa K."/>
            <person name="Okumura K."/>
            <person name="Nagase T."/>
            <person name="Nomura N."/>
            <person name="Kikuchi H."/>
            <person name="Masuho Y."/>
            <person name="Yamashita R."/>
            <person name="Nakai K."/>
            <person name="Yada T."/>
            <person name="Nakamura Y."/>
            <person name="Ohara O."/>
            <person name="Isogai T."/>
            <person name="Sugano S."/>
        </authorList>
    </citation>
    <scope>NUCLEOTIDE SEQUENCE [LARGE SCALE MRNA] OF 318-800</scope>
    <scope>VARIANT ALA-472</scope>
    <source>
        <tissue>Hepatoma</tissue>
        <tissue>Teratocarcinoma</tissue>
    </source>
</reference>
<reference key="5">
    <citation type="journal article" date="2002" name="Mol. Biol. Cell">
        <title>Functional proteomic analysis of human nucleolus.</title>
        <authorList>
            <person name="Scherl A."/>
            <person name="Coute Y."/>
            <person name="Deon C."/>
            <person name="Calle A."/>
            <person name="Kindbeiter K."/>
            <person name="Sanchez J.-C."/>
            <person name="Greco A."/>
            <person name="Hochstrasser D.F."/>
            <person name="Diaz J.-J."/>
        </authorList>
    </citation>
    <scope>SUBCELLULAR LOCATION [LARGE SCALE ANALYSIS]</scope>
    <source>
        <tissue>Cervix carcinoma</tissue>
    </source>
</reference>
<reference key="6">
    <citation type="journal article" date="2008" name="Proc. Natl. Acad. Sci. U.S.A.">
        <title>A quantitative atlas of mitotic phosphorylation.</title>
        <authorList>
            <person name="Dephoure N."/>
            <person name="Zhou C."/>
            <person name="Villen J."/>
            <person name="Beausoleil S.A."/>
            <person name="Bakalarski C.E."/>
            <person name="Elledge S.J."/>
            <person name="Gygi S.P."/>
        </authorList>
    </citation>
    <scope>PHOSPHORYLATION [LARGE SCALE ANALYSIS] AT SER-787</scope>
    <scope>IDENTIFICATION BY MASS SPECTROMETRY [LARGE SCALE ANALYSIS]</scope>
    <source>
        <tissue>Cervix carcinoma</tissue>
    </source>
</reference>
<reference key="7">
    <citation type="journal article" date="2009" name="Sci. Signal.">
        <title>Quantitative phosphoproteomic analysis of T cell receptor signaling reveals system-wide modulation of protein-protein interactions.</title>
        <authorList>
            <person name="Mayya V."/>
            <person name="Lundgren D.H."/>
            <person name="Hwang S.-I."/>
            <person name="Rezaul K."/>
            <person name="Wu L."/>
            <person name="Eng J.K."/>
            <person name="Rodionov V."/>
            <person name="Han D.K."/>
        </authorList>
    </citation>
    <scope>PHOSPHORYLATION [LARGE SCALE ANALYSIS] AT SER-787</scope>
    <scope>IDENTIFICATION BY MASS SPECTROMETRY [LARGE SCALE ANALYSIS]</scope>
    <source>
        <tissue>Leukemic T-cell</tissue>
    </source>
</reference>
<reference key="8">
    <citation type="journal article" date="2010" name="Sci. Signal.">
        <title>Quantitative phosphoproteomics reveals widespread full phosphorylation site occupancy during mitosis.</title>
        <authorList>
            <person name="Olsen J.V."/>
            <person name="Vermeulen M."/>
            <person name="Santamaria A."/>
            <person name="Kumar C."/>
            <person name="Miller M.L."/>
            <person name="Jensen L.J."/>
            <person name="Gnad F."/>
            <person name="Cox J."/>
            <person name="Jensen T.S."/>
            <person name="Nigg E.A."/>
            <person name="Brunak S."/>
            <person name="Mann M."/>
        </authorList>
    </citation>
    <scope>PHOSPHORYLATION [LARGE SCALE ANALYSIS] AT SER-787</scope>
    <scope>IDENTIFICATION BY MASS SPECTROMETRY [LARGE SCALE ANALYSIS]</scope>
    <source>
        <tissue>Cervix carcinoma</tissue>
    </source>
</reference>
<reference key="9">
    <citation type="journal article" date="2013" name="J. Proteome Res.">
        <title>Toward a comprehensive characterization of a human cancer cell phosphoproteome.</title>
        <authorList>
            <person name="Zhou H."/>
            <person name="Di Palma S."/>
            <person name="Preisinger C."/>
            <person name="Peng M."/>
            <person name="Polat A.N."/>
            <person name="Heck A.J."/>
            <person name="Mohammed S."/>
        </authorList>
    </citation>
    <scope>PHOSPHORYLATION [LARGE SCALE ANALYSIS] AT SER-787</scope>
    <scope>IDENTIFICATION BY MASS SPECTROMETRY [LARGE SCALE ANALYSIS]</scope>
    <source>
        <tissue>Cervix carcinoma</tissue>
        <tissue>Erythroleukemia</tissue>
    </source>
</reference>
<reference key="10">
    <citation type="journal article" date="2017" name="Nat. Struct. Mol. Biol.">
        <title>Site-specific mapping of the human SUMO proteome reveals co-modification with phosphorylation.</title>
        <authorList>
            <person name="Hendriks I.A."/>
            <person name="Lyon D."/>
            <person name="Young C."/>
            <person name="Jensen L.J."/>
            <person name="Vertegaal A.C."/>
            <person name="Nielsen M.L."/>
        </authorList>
    </citation>
    <scope>SUMOYLATION [LARGE SCALE ANALYSIS] AT LYS-333</scope>
    <scope>IDENTIFICATION BY MASS SPECTROMETRY [LARGE SCALE ANALYSIS]</scope>
</reference>
<gene>
    <name type="primary">NOC3L</name>
    <name type="synonym">AD24</name>
    <name type="synonym">C10orf117</name>
    <name type="synonym">FAD24</name>
</gene>
<organism>
    <name type="scientific">Homo sapiens</name>
    <name type="common">Human</name>
    <dbReference type="NCBI Taxonomy" id="9606"/>
    <lineage>
        <taxon>Eukaryota</taxon>
        <taxon>Metazoa</taxon>
        <taxon>Chordata</taxon>
        <taxon>Craniata</taxon>
        <taxon>Vertebrata</taxon>
        <taxon>Euteleostomi</taxon>
        <taxon>Mammalia</taxon>
        <taxon>Eutheria</taxon>
        <taxon>Euarchontoglires</taxon>
        <taxon>Primates</taxon>
        <taxon>Haplorrhini</taxon>
        <taxon>Catarrhini</taxon>
        <taxon>Hominidae</taxon>
        <taxon>Homo</taxon>
    </lineage>
</organism>
<protein>
    <recommendedName>
        <fullName>Nucleolar complex protein 3 homolog</fullName>
        <shortName>NOC3 protein homolog</shortName>
    </recommendedName>
    <alternativeName>
        <fullName>Factor for adipocyte differentiation 24</fullName>
    </alternativeName>
    <alternativeName>
        <fullName>NOC3-like protein</fullName>
    </alternativeName>
    <alternativeName>
        <fullName>Nucleolar complex-associated protein 3-like protein</fullName>
    </alternativeName>
</protein>
<proteinExistence type="evidence at protein level"/>
<dbReference type="EMBL" id="AB077992">
    <property type="protein sequence ID" value="BAB84194.1"/>
    <property type="molecule type" value="mRNA"/>
</dbReference>
<dbReference type="EMBL" id="AL355341">
    <property type="status" value="NOT_ANNOTATED_CDS"/>
    <property type="molecule type" value="Genomic_DNA"/>
</dbReference>
<dbReference type="EMBL" id="BC049850">
    <property type="protein sequence ID" value="AAH49850.1"/>
    <property type="molecule type" value="mRNA"/>
</dbReference>
<dbReference type="EMBL" id="AK022882">
    <property type="protein sequence ID" value="BAB14291.1"/>
    <property type="status" value="ALT_INIT"/>
    <property type="molecule type" value="mRNA"/>
</dbReference>
<dbReference type="EMBL" id="AK026953">
    <property type="protein sequence ID" value="BAB15599.1"/>
    <property type="status" value="ALT_INIT"/>
    <property type="molecule type" value="mRNA"/>
</dbReference>
<dbReference type="CCDS" id="CCDS7433.1"/>
<dbReference type="RefSeq" id="NP_071896.8">
    <property type="nucleotide sequence ID" value="NM_022451.10"/>
</dbReference>
<dbReference type="PDB" id="8FKV">
    <property type="method" value="EM"/>
    <property type="resolution" value="2.47 A"/>
    <property type="chains" value="SU=1-800"/>
</dbReference>
<dbReference type="PDB" id="8FKW">
    <property type="method" value="EM"/>
    <property type="resolution" value="2.50 A"/>
    <property type="chains" value="SU=1-800"/>
</dbReference>
<dbReference type="PDB" id="8FKX">
    <property type="method" value="EM"/>
    <property type="resolution" value="2.59 A"/>
    <property type="chains" value="SU=1-800"/>
</dbReference>
<dbReference type="PDB" id="8FKY">
    <property type="method" value="EM"/>
    <property type="resolution" value="2.67 A"/>
    <property type="chains" value="SU=1-800"/>
</dbReference>
<dbReference type="PDBsum" id="8FKV"/>
<dbReference type="PDBsum" id="8FKW"/>
<dbReference type="PDBsum" id="8FKX"/>
<dbReference type="PDBsum" id="8FKY"/>
<dbReference type="EMDB" id="EMD-29258"/>
<dbReference type="EMDB" id="EMD-29259"/>
<dbReference type="EMDB" id="EMD-29260"/>
<dbReference type="EMDB" id="EMD-29261"/>
<dbReference type="SMR" id="Q8WTT2"/>
<dbReference type="BioGRID" id="122131">
    <property type="interactions" value="249"/>
</dbReference>
<dbReference type="FunCoup" id="Q8WTT2">
    <property type="interactions" value="3690"/>
</dbReference>
<dbReference type="IntAct" id="Q8WTT2">
    <property type="interactions" value="129"/>
</dbReference>
<dbReference type="MINT" id="Q8WTT2"/>
<dbReference type="STRING" id="9606.ENSP00000360412"/>
<dbReference type="GlyGen" id="Q8WTT2">
    <property type="glycosylation" value="1 site, 1 O-linked glycan (1 site)"/>
</dbReference>
<dbReference type="iPTMnet" id="Q8WTT2"/>
<dbReference type="PhosphoSitePlus" id="Q8WTT2"/>
<dbReference type="SwissPalm" id="Q8WTT2"/>
<dbReference type="BioMuta" id="NOC3L"/>
<dbReference type="DMDM" id="74751495"/>
<dbReference type="jPOST" id="Q8WTT2"/>
<dbReference type="MassIVE" id="Q8WTT2"/>
<dbReference type="PaxDb" id="9606-ENSP00000360412"/>
<dbReference type="PeptideAtlas" id="Q8WTT2"/>
<dbReference type="ProteomicsDB" id="74598"/>
<dbReference type="Pumba" id="Q8WTT2"/>
<dbReference type="Antibodypedia" id="30528">
    <property type="antibodies" value="193 antibodies from 29 providers"/>
</dbReference>
<dbReference type="DNASU" id="64318"/>
<dbReference type="Ensembl" id="ENST00000371361.3">
    <property type="protein sequence ID" value="ENSP00000360412.3"/>
    <property type="gene ID" value="ENSG00000173145.11"/>
</dbReference>
<dbReference type="GeneID" id="64318"/>
<dbReference type="KEGG" id="hsa:64318"/>
<dbReference type="MANE-Select" id="ENST00000371361.3">
    <property type="protein sequence ID" value="ENSP00000360412.3"/>
    <property type="RefSeq nucleotide sequence ID" value="NM_022451.11"/>
    <property type="RefSeq protein sequence ID" value="NP_071896.8"/>
</dbReference>
<dbReference type="UCSC" id="uc001kjq.2">
    <property type="organism name" value="human"/>
</dbReference>
<dbReference type="AGR" id="HGNC:24034"/>
<dbReference type="CTD" id="64318"/>
<dbReference type="DisGeNET" id="64318"/>
<dbReference type="GeneCards" id="NOC3L"/>
<dbReference type="HGNC" id="HGNC:24034">
    <property type="gene designation" value="NOC3L"/>
</dbReference>
<dbReference type="HPA" id="ENSG00000173145">
    <property type="expression patterns" value="Low tissue specificity"/>
</dbReference>
<dbReference type="MalaCards" id="NOC3L"/>
<dbReference type="MIM" id="610769">
    <property type="type" value="gene"/>
</dbReference>
<dbReference type="neXtProt" id="NX_Q8WTT2"/>
<dbReference type="OpenTargets" id="ENSG00000173145"/>
<dbReference type="PharmGKB" id="PA134887727"/>
<dbReference type="VEuPathDB" id="HostDB:ENSG00000173145"/>
<dbReference type="eggNOG" id="KOG2153">
    <property type="taxonomic scope" value="Eukaryota"/>
</dbReference>
<dbReference type="GeneTree" id="ENSGT00390000008540"/>
<dbReference type="HOGENOM" id="CLU_012441_2_1_1"/>
<dbReference type="InParanoid" id="Q8WTT2"/>
<dbReference type="OMA" id="HYCPQVR"/>
<dbReference type="OrthoDB" id="10263597at2759"/>
<dbReference type="PAN-GO" id="Q8WTT2">
    <property type="GO annotations" value="3 GO annotations based on evolutionary models"/>
</dbReference>
<dbReference type="PhylomeDB" id="Q8WTT2"/>
<dbReference type="TreeFam" id="TF318817"/>
<dbReference type="PathwayCommons" id="Q8WTT2"/>
<dbReference type="SignaLink" id="Q8WTT2"/>
<dbReference type="SIGNOR" id="Q8WTT2"/>
<dbReference type="BioGRID-ORCS" id="64318">
    <property type="hits" value="521 hits in 1168 CRISPR screens"/>
</dbReference>
<dbReference type="CD-CODE" id="91857CE7">
    <property type="entry name" value="Nucleolus"/>
</dbReference>
<dbReference type="ChiTaRS" id="NOC3L">
    <property type="organism name" value="human"/>
</dbReference>
<dbReference type="GenomeRNAi" id="64318"/>
<dbReference type="Pharos" id="Q8WTT2">
    <property type="development level" value="Tbio"/>
</dbReference>
<dbReference type="PRO" id="PR:Q8WTT2"/>
<dbReference type="Proteomes" id="UP000005640">
    <property type="component" value="Chromosome 10"/>
</dbReference>
<dbReference type="RNAct" id="Q8WTT2">
    <property type="molecule type" value="protein"/>
</dbReference>
<dbReference type="Bgee" id="ENSG00000173145">
    <property type="expression patterns" value="Expressed in secondary oocyte and 197 other cell types or tissues"/>
</dbReference>
<dbReference type="GO" id="GO:0005739">
    <property type="term" value="C:mitochondrion"/>
    <property type="evidence" value="ECO:0000314"/>
    <property type="project" value="HPA"/>
</dbReference>
<dbReference type="GO" id="GO:0016607">
    <property type="term" value="C:nuclear speck"/>
    <property type="evidence" value="ECO:0007669"/>
    <property type="project" value="UniProtKB-SubCell"/>
</dbReference>
<dbReference type="GO" id="GO:0005730">
    <property type="term" value="C:nucleolus"/>
    <property type="evidence" value="ECO:0000314"/>
    <property type="project" value="HPA"/>
</dbReference>
<dbReference type="GO" id="GO:0005654">
    <property type="term" value="C:nucleoplasm"/>
    <property type="evidence" value="ECO:0000314"/>
    <property type="project" value="HPA"/>
</dbReference>
<dbReference type="GO" id="GO:0003682">
    <property type="term" value="F:chromatin binding"/>
    <property type="evidence" value="ECO:0000318"/>
    <property type="project" value="GO_Central"/>
</dbReference>
<dbReference type="GO" id="GO:0003723">
    <property type="term" value="F:RNA binding"/>
    <property type="evidence" value="ECO:0007005"/>
    <property type="project" value="UniProtKB"/>
</dbReference>
<dbReference type="GO" id="GO:0006270">
    <property type="term" value="P:DNA replication initiation"/>
    <property type="evidence" value="ECO:0000318"/>
    <property type="project" value="GO_Central"/>
</dbReference>
<dbReference type="GO" id="GO:0045444">
    <property type="term" value="P:fat cell differentiation"/>
    <property type="evidence" value="ECO:0007669"/>
    <property type="project" value="Ensembl"/>
</dbReference>
<dbReference type="InterPro" id="IPR016024">
    <property type="entry name" value="ARM-type_fold"/>
</dbReference>
<dbReference type="InterPro" id="IPR005612">
    <property type="entry name" value="CCAAT-binding_factor"/>
</dbReference>
<dbReference type="InterPro" id="IPR011501">
    <property type="entry name" value="Noc3_N"/>
</dbReference>
<dbReference type="InterPro" id="IPR016903">
    <property type="entry name" value="Nucleolar_cplx-assoc_3"/>
</dbReference>
<dbReference type="PANTHER" id="PTHR14428">
    <property type="entry name" value="NUCLEOLAR COMPLEX PROTEIN 3"/>
    <property type="match status" value="1"/>
</dbReference>
<dbReference type="PANTHER" id="PTHR14428:SF5">
    <property type="entry name" value="NUCLEOLAR COMPLEX PROTEIN 3 HOMOLOG"/>
    <property type="match status" value="1"/>
</dbReference>
<dbReference type="Pfam" id="PF03914">
    <property type="entry name" value="CBF"/>
    <property type="match status" value="1"/>
</dbReference>
<dbReference type="Pfam" id="PF07540">
    <property type="entry name" value="NOC3p"/>
    <property type="match status" value="1"/>
</dbReference>
<dbReference type="PIRSF" id="PIRSF028977">
    <property type="entry name" value="Nucleolar_complex_p3"/>
    <property type="match status" value="1"/>
</dbReference>
<dbReference type="SUPFAM" id="SSF48371">
    <property type="entry name" value="ARM repeat"/>
    <property type="match status" value="1"/>
</dbReference>
<feature type="chain" id="PRO_0000173474" description="Nucleolar complex protein 3 homolog">
    <location>
        <begin position="1"/>
        <end position="800"/>
    </location>
</feature>
<feature type="region of interest" description="Disordered" evidence="3">
    <location>
        <begin position="27"/>
        <end position="93"/>
    </location>
</feature>
<feature type="region of interest" description="Disordered" evidence="3">
    <location>
        <begin position="160"/>
        <end position="187"/>
    </location>
</feature>
<feature type="coiled-coil region" evidence="2">
    <location>
        <begin position="451"/>
        <end position="490"/>
    </location>
</feature>
<feature type="compositionally biased region" description="Basic residues" evidence="3">
    <location>
        <begin position="40"/>
        <end position="51"/>
    </location>
</feature>
<feature type="compositionally biased region" description="Basic and acidic residues" evidence="3">
    <location>
        <begin position="66"/>
        <end position="78"/>
    </location>
</feature>
<feature type="compositionally biased region" description="Acidic residues" evidence="3">
    <location>
        <begin position="79"/>
        <end position="93"/>
    </location>
</feature>
<feature type="compositionally biased region" description="Basic and acidic residues" evidence="3">
    <location>
        <begin position="160"/>
        <end position="174"/>
    </location>
</feature>
<feature type="compositionally biased region" description="Acidic residues" evidence="3">
    <location>
        <begin position="175"/>
        <end position="187"/>
    </location>
</feature>
<feature type="modified residue" description="Phosphoserine" evidence="7 8 9 10">
    <location>
        <position position="787"/>
    </location>
</feature>
<feature type="cross-link" description="Glycyl lysine isopeptide (Lys-Gly) (interchain with G-Cter in SUMO2)" evidence="11">
    <location>
        <position position="333"/>
    </location>
</feature>
<feature type="sequence variant" id="VAR_023549" description="In dbSNP:rs12572897.">
    <original>P</original>
    <variation>L</variation>
    <location>
        <position position="194"/>
    </location>
</feature>
<feature type="sequence variant" id="VAR_048621" description="In dbSNP:rs11187895.">
    <original>P</original>
    <variation>R</variation>
    <location>
        <position position="444"/>
    </location>
</feature>
<feature type="sequence variant" id="VAR_023550" description="In dbSNP:rs3758526." evidence="4">
    <original>E</original>
    <variation>A</variation>
    <location>
        <position position="472"/>
    </location>
</feature>
<feature type="sequence variant" id="VAR_048622" description="In dbSNP:rs11187892.">
    <original>R</original>
    <variation>I</variation>
    <location>
        <position position="504"/>
    </location>
</feature>
<feature type="sequence variant" id="VAR_048623" description="In dbSNP:rs12259382.">
    <original>T</original>
    <variation>S</variation>
    <location>
        <position position="655"/>
    </location>
</feature>
<feature type="sequence variant" id="VAR_048624" description="In dbSNP:rs17517578.">
    <original>A</original>
    <variation>T</variation>
    <location>
        <position position="695"/>
    </location>
</feature>